<proteinExistence type="uncertain"/>
<feature type="chain" id="PRO_0000309055" description="Putative uncharacterized protein YNR001W-A">
    <location>
        <begin position="1"/>
        <end position="72"/>
    </location>
</feature>
<gene>
    <name type="ordered locus">YNR001W-A</name>
</gene>
<dbReference type="EMBL" id="X77395">
    <property type="status" value="NOT_ANNOTATED_CDS"/>
    <property type="molecule type" value="Genomic_DNA"/>
</dbReference>
<dbReference type="EMBL" id="Z71616">
    <property type="status" value="NOT_ANNOTATED_CDS"/>
    <property type="molecule type" value="Genomic_DNA"/>
</dbReference>
<dbReference type="EMBL" id="Z71617">
    <property type="status" value="NOT_ANNOTATED_CDS"/>
    <property type="molecule type" value="Genomic_DNA"/>
</dbReference>
<dbReference type="SMR" id="P0C5Q7"/>
<dbReference type="STRING" id="4932.YNR001W-A"/>
<dbReference type="PaxDb" id="4932-YNR001W-A"/>
<dbReference type="TopDownProteomics" id="P0C5Q7"/>
<dbReference type="EnsemblFungi" id="YNR001W-A_mRNA">
    <property type="protein sequence ID" value="YNR001W-A"/>
    <property type="gene ID" value="YNR001W-A"/>
</dbReference>
<dbReference type="AGR" id="SGD:S000007625"/>
<dbReference type="SGD" id="S000007625">
    <property type="gene designation" value="YNR001W-A"/>
</dbReference>
<dbReference type="HOGENOM" id="CLU_2724148_0_0_1"/>
<evidence type="ECO:0000305" key="1">
    <source>
    </source>
</evidence>
<comment type="caution">
    <text evidence="1">Product of a dubious gene prediction unlikely to encode a functional protein. Because of that it is not part of the S.cerevisiae S288c complete/reference proteome set.</text>
</comment>
<reference key="1">
    <citation type="journal article" date="1994" name="Yeast">
        <title>Twelve open reading frames revealed in the 23.6 kb segment flanking the centromere on the Saccharomyces cerevisiae chromosome XIV right arm.</title>
        <authorList>
            <person name="Verhasselt P."/>
            <person name="Aert R."/>
            <person name="Voet M."/>
            <person name="Volckaert G."/>
        </authorList>
    </citation>
    <scope>NUCLEOTIDE SEQUENCE [GENOMIC DNA]</scope>
    <source>
        <strain>ATCC 96604 / S288c / FY1679</strain>
    </source>
</reference>
<reference key="2">
    <citation type="journal article" date="1997" name="Nature">
        <title>The nucleotide sequence of Saccharomyces cerevisiae chromosome XIV and its evolutionary implications.</title>
        <authorList>
            <person name="Philippsen P."/>
            <person name="Kleine K."/>
            <person name="Poehlmann R."/>
            <person name="Duesterhoeft A."/>
            <person name="Hamberg K."/>
            <person name="Hegemann J.H."/>
            <person name="Obermaier B."/>
            <person name="Urrestarazu L.A."/>
            <person name="Aert R."/>
            <person name="Albermann K."/>
            <person name="Altmann R."/>
            <person name="Andre B."/>
            <person name="Baladron V."/>
            <person name="Ballesta J.P.G."/>
            <person name="Becam A.-M."/>
            <person name="Beinhauer J.D."/>
            <person name="Boskovic J."/>
            <person name="Buitrago M.J."/>
            <person name="Bussereau F."/>
            <person name="Coster F."/>
            <person name="Crouzet M."/>
            <person name="D'Angelo M."/>
            <person name="Dal Pero F."/>
            <person name="De Antoni A."/>
            <person name="del Rey F."/>
            <person name="Doignon F."/>
            <person name="Domdey H."/>
            <person name="Dubois E."/>
            <person name="Fiedler T.A."/>
            <person name="Fleig U."/>
            <person name="Floeth M."/>
            <person name="Fritz C."/>
            <person name="Gaillardin C."/>
            <person name="Garcia-Cantalejo J.M."/>
            <person name="Glansdorff N."/>
            <person name="Goffeau A."/>
            <person name="Gueldener U."/>
            <person name="Herbert C.J."/>
            <person name="Heumann K."/>
            <person name="Heuss-Neitzel D."/>
            <person name="Hilbert H."/>
            <person name="Hinni K."/>
            <person name="Iraqui Houssaini I."/>
            <person name="Jacquet M."/>
            <person name="Jimenez A."/>
            <person name="Jonniaux J.-L."/>
            <person name="Karpfinger-Hartl L."/>
            <person name="Lanfranchi G."/>
            <person name="Lepingle A."/>
            <person name="Levesque H."/>
            <person name="Lyck R."/>
            <person name="Maftahi M."/>
            <person name="Mallet L."/>
            <person name="Maurer C.T.C."/>
            <person name="Messenguy F."/>
            <person name="Mewes H.-W."/>
            <person name="Moestl D."/>
            <person name="Nasr F."/>
            <person name="Nicaud J.-M."/>
            <person name="Niedenthal R.K."/>
            <person name="Pandolfo D."/>
            <person name="Pierard A."/>
            <person name="Piravandi E."/>
            <person name="Planta R.J."/>
            <person name="Pohl T.M."/>
            <person name="Purnelle B."/>
            <person name="Rebischung C."/>
            <person name="Remacha M.A."/>
            <person name="Revuelta J.L."/>
            <person name="Rinke M."/>
            <person name="Saiz J.E."/>
            <person name="Sartorello F."/>
            <person name="Scherens B."/>
            <person name="Sen-Gupta M."/>
            <person name="Soler-Mira A."/>
            <person name="Urbanus J.H.M."/>
            <person name="Valle G."/>
            <person name="Van Dyck L."/>
            <person name="Verhasselt P."/>
            <person name="Vierendeels F."/>
            <person name="Vissers S."/>
            <person name="Voet M."/>
            <person name="Volckaert G."/>
            <person name="Wach A."/>
            <person name="Wambutt R."/>
            <person name="Wedler H."/>
            <person name="Zollner A."/>
            <person name="Hani J."/>
        </authorList>
    </citation>
    <scope>NUCLEOTIDE SEQUENCE [LARGE SCALE GENOMIC DNA]</scope>
    <source>
        <strain>ATCC 204508 / S288c</strain>
    </source>
</reference>
<reference key="3">
    <citation type="journal article" date="2014" name="G3 (Bethesda)">
        <title>The reference genome sequence of Saccharomyces cerevisiae: Then and now.</title>
        <authorList>
            <person name="Engel S.R."/>
            <person name="Dietrich F.S."/>
            <person name="Fisk D.G."/>
            <person name="Binkley G."/>
            <person name="Balakrishnan R."/>
            <person name="Costanzo M.C."/>
            <person name="Dwight S.S."/>
            <person name="Hitz B.C."/>
            <person name="Karra K."/>
            <person name="Nash R.S."/>
            <person name="Weng S."/>
            <person name="Wong E.D."/>
            <person name="Lloyd P."/>
            <person name="Skrzypek M.S."/>
            <person name="Miyasato S.R."/>
            <person name="Simison M."/>
            <person name="Cherry J.M."/>
        </authorList>
    </citation>
    <scope>GENOME REANNOTATION</scope>
    <source>
        <strain>ATCC 204508 / S288c</strain>
    </source>
</reference>
<reference key="4">
    <citation type="journal article" date="2000" name="FEBS Lett.">
        <title>Genomic exploration of the hemiascomycetous yeasts: 4. The genome of Saccharomyces cerevisiae revisited.</title>
        <authorList>
            <person name="Blandin G."/>
            <person name="Durrens P."/>
            <person name="Tekaia F."/>
            <person name="Aigle M."/>
            <person name="Bolotin-Fukuhara M."/>
            <person name="Bon E."/>
            <person name="Casaregola S."/>
            <person name="de Montigny J."/>
            <person name="Gaillardin C."/>
            <person name="Lepingle A."/>
            <person name="Llorente B."/>
            <person name="Malpertuy A."/>
            <person name="Neuveglise C."/>
            <person name="Ozier-Kalogeropoulos O."/>
            <person name="Perrin A."/>
            <person name="Potier S."/>
            <person name="Souciet J.-L."/>
            <person name="Talla E."/>
            <person name="Toffano-Nioche C."/>
            <person name="Wesolowski-Louvel M."/>
            <person name="Marck C."/>
            <person name="Dujon B."/>
        </authorList>
    </citation>
    <scope>GENOME REANNOTATION</scope>
</reference>
<name>YN001_YEAST</name>
<sequence>MDGYQLTFSNNKRSDKSIVSEKLQRDCDPPITQKYFWSSGGHTFHFRAAAAEKNVTPFSTKMQGKYIKKKAM</sequence>
<organism>
    <name type="scientific">Saccharomyces cerevisiae (strain ATCC 204508 / S288c)</name>
    <name type="common">Baker's yeast</name>
    <dbReference type="NCBI Taxonomy" id="559292"/>
    <lineage>
        <taxon>Eukaryota</taxon>
        <taxon>Fungi</taxon>
        <taxon>Dikarya</taxon>
        <taxon>Ascomycota</taxon>
        <taxon>Saccharomycotina</taxon>
        <taxon>Saccharomycetes</taxon>
        <taxon>Saccharomycetales</taxon>
        <taxon>Saccharomycetaceae</taxon>
        <taxon>Saccharomyces</taxon>
    </lineage>
</organism>
<accession>P0C5Q7</accession>
<protein>
    <recommendedName>
        <fullName>Putative uncharacterized protein YNR001W-A</fullName>
    </recommendedName>
</protein>